<keyword id="KW-0067">ATP-binding</keyword>
<keyword id="KW-0963">Cytoplasm</keyword>
<keyword id="KW-0418">Kinase</keyword>
<keyword id="KW-0520">NAD</keyword>
<keyword id="KW-0521">NADP</keyword>
<keyword id="KW-0547">Nucleotide-binding</keyword>
<keyword id="KW-0808">Transferase</keyword>
<organism>
    <name type="scientific">Thermobifida fusca (strain YX)</name>
    <dbReference type="NCBI Taxonomy" id="269800"/>
    <lineage>
        <taxon>Bacteria</taxon>
        <taxon>Bacillati</taxon>
        <taxon>Actinomycetota</taxon>
        <taxon>Actinomycetes</taxon>
        <taxon>Streptosporangiales</taxon>
        <taxon>Nocardiopsidaceae</taxon>
        <taxon>Thermobifida</taxon>
    </lineage>
</organism>
<comment type="function">
    <text evidence="1">Involved in the regulation of the intracellular balance of NAD and NADP, and is a key enzyme in the biosynthesis of NADP. Catalyzes specifically the phosphorylation on 2'-hydroxyl of the adenosine moiety of NAD to yield NADP.</text>
</comment>
<comment type="catalytic activity">
    <reaction evidence="1">
        <text>NAD(+) + ATP = ADP + NADP(+) + H(+)</text>
        <dbReference type="Rhea" id="RHEA:18629"/>
        <dbReference type="ChEBI" id="CHEBI:15378"/>
        <dbReference type="ChEBI" id="CHEBI:30616"/>
        <dbReference type="ChEBI" id="CHEBI:57540"/>
        <dbReference type="ChEBI" id="CHEBI:58349"/>
        <dbReference type="ChEBI" id="CHEBI:456216"/>
        <dbReference type="EC" id="2.7.1.23"/>
    </reaction>
</comment>
<comment type="cofactor">
    <cofactor evidence="1">
        <name>a divalent metal cation</name>
        <dbReference type="ChEBI" id="CHEBI:60240"/>
    </cofactor>
</comment>
<comment type="subcellular location">
    <subcellularLocation>
        <location evidence="1">Cytoplasm</location>
    </subcellularLocation>
</comment>
<comment type="similarity">
    <text evidence="1">Belongs to the NAD kinase family.</text>
</comment>
<sequence length="326" mass="34490">MKTSESTDRFGGVAGETTNRTVLLLAHTGRPAALRSARLVHESLTRAGVTVRMLASEIEAIRKTGARMQPVEVVEPGADAAAGTELIMVLGGDGTLLRAAELARPAGAPLLGVNLGHVGFLAEAERDDLSDTVRCVVERDYSVEERMTIDVAVYNGGRTSAAPAVRTWALNEATAEKVESGRMLEVVLEIDGRPLSRWGCDGVVCATPTGSTAHAFSGGGPIVWPSVEALLVVPLSAHALFARPLVVAPDAVIALEVLPETTDGVLWCDGRRRVELPAGARVEISRSKTPVRLARLQQAPFTNRLVAKFALPVAGWRGRAAERDSG</sequence>
<feature type="chain" id="PRO_0000229705" description="NAD kinase">
    <location>
        <begin position="1"/>
        <end position="326"/>
    </location>
</feature>
<feature type="active site" description="Proton acceptor" evidence="1">
    <location>
        <position position="93"/>
    </location>
</feature>
<feature type="binding site" evidence="1">
    <location>
        <begin position="93"/>
        <end position="94"/>
    </location>
    <ligand>
        <name>NAD(+)</name>
        <dbReference type="ChEBI" id="CHEBI:57540"/>
    </ligand>
</feature>
<feature type="binding site" evidence="1">
    <location>
        <position position="98"/>
    </location>
    <ligand>
        <name>NAD(+)</name>
        <dbReference type="ChEBI" id="CHEBI:57540"/>
    </ligand>
</feature>
<feature type="binding site" evidence="1">
    <location>
        <begin position="171"/>
        <end position="172"/>
    </location>
    <ligand>
        <name>NAD(+)</name>
        <dbReference type="ChEBI" id="CHEBI:57540"/>
    </ligand>
</feature>
<feature type="binding site" evidence="1">
    <location>
        <position position="182"/>
    </location>
    <ligand>
        <name>NAD(+)</name>
        <dbReference type="ChEBI" id="CHEBI:57540"/>
    </ligand>
</feature>
<feature type="binding site" evidence="1">
    <location>
        <position position="201"/>
    </location>
    <ligand>
        <name>NAD(+)</name>
        <dbReference type="ChEBI" id="CHEBI:57540"/>
    </ligand>
</feature>
<feature type="binding site" evidence="1">
    <location>
        <begin position="212"/>
        <end position="217"/>
    </location>
    <ligand>
        <name>NAD(+)</name>
        <dbReference type="ChEBI" id="CHEBI:57540"/>
    </ligand>
</feature>
<evidence type="ECO:0000255" key="1">
    <source>
        <dbReference type="HAMAP-Rule" id="MF_00361"/>
    </source>
</evidence>
<proteinExistence type="inferred from homology"/>
<dbReference type="EC" id="2.7.1.23" evidence="1"/>
<dbReference type="EMBL" id="CP000088">
    <property type="protein sequence ID" value="AAZ56066.1"/>
    <property type="molecule type" value="Genomic_DNA"/>
</dbReference>
<dbReference type="RefSeq" id="WP_011292456.1">
    <property type="nucleotide sequence ID" value="NC_007333.1"/>
</dbReference>
<dbReference type="SMR" id="Q47NA3"/>
<dbReference type="STRING" id="269800.Tfu_2033"/>
<dbReference type="KEGG" id="tfu:Tfu_2033"/>
<dbReference type="eggNOG" id="COG0061">
    <property type="taxonomic scope" value="Bacteria"/>
</dbReference>
<dbReference type="HOGENOM" id="CLU_008831_0_0_11"/>
<dbReference type="OrthoDB" id="9774737at2"/>
<dbReference type="GO" id="GO:0005737">
    <property type="term" value="C:cytoplasm"/>
    <property type="evidence" value="ECO:0007669"/>
    <property type="project" value="UniProtKB-SubCell"/>
</dbReference>
<dbReference type="GO" id="GO:0005524">
    <property type="term" value="F:ATP binding"/>
    <property type="evidence" value="ECO:0007669"/>
    <property type="project" value="UniProtKB-KW"/>
</dbReference>
<dbReference type="GO" id="GO:0046872">
    <property type="term" value="F:metal ion binding"/>
    <property type="evidence" value="ECO:0007669"/>
    <property type="project" value="UniProtKB-UniRule"/>
</dbReference>
<dbReference type="GO" id="GO:0051287">
    <property type="term" value="F:NAD binding"/>
    <property type="evidence" value="ECO:0007669"/>
    <property type="project" value="UniProtKB-ARBA"/>
</dbReference>
<dbReference type="GO" id="GO:0003951">
    <property type="term" value="F:NAD+ kinase activity"/>
    <property type="evidence" value="ECO:0007669"/>
    <property type="project" value="UniProtKB-UniRule"/>
</dbReference>
<dbReference type="GO" id="GO:0019674">
    <property type="term" value="P:NAD metabolic process"/>
    <property type="evidence" value="ECO:0007669"/>
    <property type="project" value="InterPro"/>
</dbReference>
<dbReference type="GO" id="GO:0006741">
    <property type="term" value="P:NADP biosynthetic process"/>
    <property type="evidence" value="ECO:0007669"/>
    <property type="project" value="UniProtKB-UniRule"/>
</dbReference>
<dbReference type="FunFam" id="2.60.200.30:FF:000007">
    <property type="entry name" value="NAD kinase"/>
    <property type="match status" value="1"/>
</dbReference>
<dbReference type="Gene3D" id="3.40.50.10330">
    <property type="entry name" value="Probable inorganic polyphosphate/atp-NAD kinase, domain 1"/>
    <property type="match status" value="1"/>
</dbReference>
<dbReference type="Gene3D" id="2.60.200.30">
    <property type="entry name" value="Probable inorganic polyphosphate/atp-NAD kinase, domain 2"/>
    <property type="match status" value="1"/>
</dbReference>
<dbReference type="HAMAP" id="MF_00361">
    <property type="entry name" value="NAD_kinase"/>
    <property type="match status" value="1"/>
</dbReference>
<dbReference type="InterPro" id="IPR017438">
    <property type="entry name" value="ATP-NAD_kinase_N"/>
</dbReference>
<dbReference type="InterPro" id="IPR017437">
    <property type="entry name" value="ATP-NAD_kinase_PpnK-typ_C"/>
</dbReference>
<dbReference type="InterPro" id="IPR016064">
    <property type="entry name" value="NAD/diacylglycerol_kinase_sf"/>
</dbReference>
<dbReference type="InterPro" id="IPR002504">
    <property type="entry name" value="NADK"/>
</dbReference>
<dbReference type="NCBIfam" id="NF002892">
    <property type="entry name" value="PRK03372.1"/>
    <property type="match status" value="1"/>
</dbReference>
<dbReference type="PANTHER" id="PTHR20275">
    <property type="entry name" value="NAD KINASE"/>
    <property type="match status" value="1"/>
</dbReference>
<dbReference type="PANTHER" id="PTHR20275:SF0">
    <property type="entry name" value="NAD KINASE"/>
    <property type="match status" value="1"/>
</dbReference>
<dbReference type="Pfam" id="PF01513">
    <property type="entry name" value="NAD_kinase"/>
    <property type="match status" value="1"/>
</dbReference>
<dbReference type="Pfam" id="PF20143">
    <property type="entry name" value="NAD_kinase_C"/>
    <property type="match status" value="1"/>
</dbReference>
<dbReference type="SUPFAM" id="SSF111331">
    <property type="entry name" value="NAD kinase/diacylglycerol kinase-like"/>
    <property type="match status" value="1"/>
</dbReference>
<reference key="1">
    <citation type="journal article" date="2007" name="J. Bacteriol.">
        <title>Genome sequence and analysis of the soil cellulolytic actinomycete Thermobifida fusca YX.</title>
        <authorList>
            <person name="Lykidis A."/>
            <person name="Mavromatis K."/>
            <person name="Ivanova N."/>
            <person name="Anderson I."/>
            <person name="Land M."/>
            <person name="DiBartolo G."/>
            <person name="Martinez M."/>
            <person name="Lapidus A."/>
            <person name="Lucas S."/>
            <person name="Copeland A."/>
            <person name="Richardson P."/>
            <person name="Wilson D.B."/>
            <person name="Kyrpides N."/>
        </authorList>
    </citation>
    <scope>NUCLEOTIDE SEQUENCE [LARGE SCALE GENOMIC DNA]</scope>
    <source>
        <strain>YX</strain>
    </source>
</reference>
<name>NADK_THEFY</name>
<gene>
    <name evidence="1" type="primary">nadK</name>
    <name type="ordered locus">Tfu_2033</name>
</gene>
<protein>
    <recommendedName>
        <fullName evidence="1">NAD kinase</fullName>
        <ecNumber evidence="1">2.7.1.23</ecNumber>
    </recommendedName>
    <alternativeName>
        <fullName evidence="1">ATP-dependent NAD kinase</fullName>
    </alternativeName>
</protein>
<accession>Q47NA3</accession>